<sequence>MTKEIILGIDLGTTNSCVAVIENKKPIVLENPEGKRTVPSVVSFNGDEVLVGDAAKRKQITNPNTVSSIKRLMGTKEKVTILNKEYTPEEISAKILSYIKDYAEKKLGTKINKAVITVPAYFDDAQRQATKNAGIIAGLTVERIINEPTAAALAYGIDKLDKEQKILVFDLGGGTFDVSVLDMADGTFEVLSTSGDNHLGGDDWDQVIINWLLKSIADEFNIDLSKNKMAMQRLKDAAEKAKIELSGVNTTTISLPFIAMDSSGQPINFEKELNRATFDNLTKNLIERLKKPVLDAMKESKLSLADIDQVLMVGGSTRMPAVQNLVKELTGKEPNHSLNPDEVVAIGAAIQGGVLAGEIDDILLLDVTPLTLSIETMGGVATPLIPRNTKIPVSKSQVFSTAADNQPSVDIRIVQGERSLAADNKLLGNFELSGIEPAPRGVPQIEIKFNIDANGIMSVNAKDLKTQKETSITIKDSQGLSQEEIDKMIKEAEENKEKDAKVKHERELVNRADSLINQLEQVVKTENVPQEQKDAFNKQIEELTNARDAQDYTKLEAEVKKVEDLLANAAKFAQQTQQQDPNNQKDDVTEATVTDDSTKK</sequence>
<protein>
    <recommendedName>
        <fullName evidence="1">Chaperone protein DnaK</fullName>
    </recommendedName>
    <alternativeName>
        <fullName evidence="1">HSP70</fullName>
    </alternativeName>
    <alternativeName>
        <fullName evidence="1">Heat shock 70 kDa protein</fullName>
    </alternativeName>
    <alternativeName>
        <fullName evidence="1">Heat shock protein 70</fullName>
    </alternativeName>
</protein>
<organism>
    <name type="scientific">Ureaplasma urealyticum serovar 10 (strain ATCC 33699 / Western)</name>
    <dbReference type="NCBI Taxonomy" id="565575"/>
    <lineage>
        <taxon>Bacteria</taxon>
        <taxon>Bacillati</taxon>
        <taxon>Mycoplasmatota</taxon>
        <taxon>Mycoplasmoidales</taxon>
        <taxon>Mycoplasmoidaceae</taxon>
        <taxon>Ureaplasma</taxon>
    </lineage>
</organism>
<accession>B5ZBE9</accession>
<feature type="chain" id="PRO_1000119773" description="Chaperone protein DnaK">
    <location>
        <begin position="1"/>
        <end position="600"/>
    </location>
</feature>
<feature type="region of interest" description="Disordered" evidence="2">
    <location>
        <begin position="572"/>
        <end position="600"/>
    </location>
</feature>
<feature type="compositionally biased region" description="Polar residues" evidence="2">
    <location>
        <begin position="591"/>
        <end position="600"/>
    </location>
</feature>
<feature type="modified residue" description="Phosphothreonine; by autocatalysis" evidence="1">
    <location>
        <position position="175"/>
    </location>
</feature>
<keyword id="KW-0067">ATP-binding</keyword>
<keyword id="KW-0143">Chaperone</keyword>
<keyword id="KW-0547">Nucleotide-binding</keyword>
<keyword id="KW-0597">Phosphoprotein</keyword>
<keyword id="KW-0346">Stress response</keyword>
<evidence type="ECO:0000255" key="1">
    <source>
        <dbReference type="HAMAP-Rule" id="MF_00332"/>
    </source>
</evidence>
<evidence type="ECO:0000256" key="2">
    <source>
        <dbReference type="SAM" id="MobiDB-lite"/>
    </source>
</evidence>
<name>DNAK_UREU1</name>
<proteinExistence type="inferred from homology"/>
<comment type="function">
    <text evidence="1">Acts as a chaperone.</text>
</comment>
<comment type="induction">
    <text evidence="1">By stress conditions e.g. heat shock.</text>
</comment>
<comment type="similarity">
    <text evidence="1">Belongs to the heat shock protein 70 family.</text>
</comment>
<dbReference type="EMBL" id="CP001184">
    <property type="protein sequence ID" value="ACI60208.1"/>
    <property type="molecule type" value="Genomic_DNA"/>
</dbReference>
<dbReference type="RefSeq" id="WP_012560313.1">
    <property type="nucleotide sequence ID" value="NC_011374.1"/>
</dbReference>
<dbReference type="SMR" id="B5ZBE9"/>
<dbReference type="STRING" id="565575.UUR10_0346"/>
<dbReference type="KEGG" id="uue:UUR10_0346"/>
<dbReference type="eggNOG" id="COG0443">
    <property type="taxonomic scope" value="Bacteria"/>
</dbReference>
<dbReference type="HOGENOM" id="CLU_005965_2_4_14"/>
<dbReference type="OrthoDB" id="9766019at2"/>
<dbReference type="Proteomes" id="UP000002018">
    <property type="component" value="Chromosome"/>
</dbReference>
<dbReference type="GO" id="GO:0005524">
    <property type="term" value="F:ATP binding"/>
    <property type="evidence" value="ECO:0007669"/>
    <property type="project" value="UniProtKB-UniRule"/>
</dbReference>
<dbReference type="GO" id="GO:0140662">
    <property type="term" value="F:ATP-dependent protein folding chaperone"/>
    <property type="evidence" value="ECO:0007669"/>
    <property type="project" value="InterPro"/>
</dbReference>
<dbReference type="GO" id="GO:0051082">
    <property type="term" value="F:unfolded protein binding"/>
    <property type="evidence" value="ECO:0007669"/>
    <property type="project" value="InterPro"/>
</dbReference>
<dbReference type="CDD" id="cd10234">
    <property type="entry name" value="ASKHA_NBD_HSP70_DnaK-like"/>
    <property type="match status" value="1"/>
</dbReference>
<dbReference type="FunFam" id="2.60.34.10:FF:000014">
    <property type="entry name" value="Chaperone protein DnaK HSP70"/>
    <property type="match status" value="1"/>
</dbReference>
<dbReference type="FunFam" id="3.30.420.40:FF:000071">
    <property type="entry name" value="Molecular chaperone DnaK"/>
    <property type="match status" value="1"/>
</dbReference>
<dbReference type="FunFam" id="3.90.640.10:FF:000003">
    <property type="entry name" value="Molecular chaperone DnaK"/>
    <property type="match status" value="1"/>
</dbReference>
<dbReference type="Gene3D" id="3.30.420.40">
    <property type="match status" value="2"/>
</dbReference>
<dbReference type="Gene3D" id="3.90.640.10">
    <property type="entry name" value="Actin, Chain A, domain 4"/>
    <property type="match status" value="1"/>
</dbReference>
<dbReference type="Gene3D" id="2.60.34.10">
    <property type="entry name" value="Substrate Binding Domain Of DNAk, Chain A, domain 1"/>
    <property type="match status" value="1"/>
</dbReference>
<dbReference type="HAMAP" id="MF_00332">
    <property type="entry name" value="DnaK"/>
    <property type="match status" value="1"/>
</dbReference>
<dbReference type="InterPro" id="IPR043129">
    <property type="entry name" value="ATPase_NBD"/>
</dbReference>
<dbReference type="InterPro" id="IPR012725">
    <property type="entry name" value="Chaperone_DnaK"/>
</dbReference>
<dbReference type="InterPro" id="IPR018181">
    <property type="entry name" value="Heat_shock_70_CS"/>
</dbReference>
<dbReference type="InterPro" id="IPR029047">
    <property type="entry name" value="HSP70_peptide-bd_sf"/>
</dbReference>
<dbReference type="InterPro" id="IPR013126">
    <property type="entry name" value="Hsp_70_fam"/>
</dbReference>
<dbReference type="NCBIfam" id="NF001413">
    <property type="entry name" value="PRK00290.1"/>
    <property type="match status" value="1"/>
</dbReference>
<dbReference type="NCBIfam" id="TIGR02350">
    <property type="entry name" value="prok_dnaK"/>
    <property type="match status" value="1"/>
</dbReference>
<dbReference type="PANTHER" id="PTHR19375">
    <property type="entry name" value="HEAT SHOCK PROTEIN 70KDA"/>
    <property type="match status" value="1"/>
</dbReference>
<dbReference type="Pfam" id="PF00012">
    <property type="entry name" value="HSP70"/>
    <property type="match status" value="1"/>
</dbReference>
<dbReference type="PRINTS" id="PR00301">
    <property type="entry name" value="HEATSHOCK70"/>
</dbReference>
<dbReference type="SUPFAM" id="SSF53067">
    <property type="entry name" value="Actin-like ATPase domain"/>
    <property type="match status" value="2"/>
</dbReference>
<dbReference type="SUPFAM" id="SSF100920">
    <property type="entry name" value="Heat shock protein 70kD (HSP70), peptide-binding domain"/>
    <property type="match status" value="1"/>
</dbReference>
<dbReference type="PROSITE" id="PS00297">
    <property type="entry name" value="HSP70_1"/>
    <property type="match status" value="1"/>
</dbReference>
<dbReference type="PROSITE" id="PS00329">
    <property type="entry name" value="HSP70_2"/>
    <property type="match status" value="1"/>
</dbReference>
<reference key="1">
    <citation type="submission" date="2008-10" db="EMBL/GenBank/DDBJ databases">
        <title>Genome sequence of Ureaplasma urealyticum serovar 10 ATCC-33699.</title>
        <authorList>
            <person name="Shrivastava S."/>
            <person name="Methe B.A."/>
            <person name="Glass J."/>
            <person name="White K."/>
            <person name="Duffy L.B."/>
        </authorList>
    </citation>
    <scope>NUCLEOTIDE SEQUENCE [LARGE SCALE GENOMIC DNA]</scope>
    <source>
        <strain>ATCC 33699 / Western</strain>
    </source>
</reference>
<gene>
    <name evidence="1" type="primary">dnaK</name>
    <name type="ordered locus">UUR10_0346</name>
</gene>